<sequence>MSIIKEFKEFAVKGNVMDLAIGVIIGGAFSKIVDSVVKDLIMPVIGVLTGGLDFSNKFVLLGQIPASFKGNPESFKDLQAAGVATFGYGSFITVLINFIILAFIIFLMVKFINKLRKPEEAAPAATPEDVLLLREIRDSLKQR</sequence>
<feature type="chain" id="PRO_0000237987" description="Large-conductance mechanosensitive channel">
    <location>
        <begin position="1"/>
        <end position="143"/>
    </location>
</feature>
<feature type="transmembrane region" description="Helical" evidence="1">
    <location>
        <begin position="10"/>
        <end position="30"/>
    </location>
</feature>
<feature type="transmembrane region" description="Helical" evidence="1">
    <location>
        <begin position="89"/>
        <end position="109"/>
    </location>
</feature>
<evidence type="ECO:0000255" key="1">
    <source>
        <dbReference type="HAMAP-Rule" id="MF_00115"/>
    </source>
</evidence>
<proteinExistence type="inferred from homology"/>
<protein>
    <recommendedName>
        <fullName evidence="1">Large-conductance mechanosensitive channel</fullName>
    </recommendedName>
</protein>
<gene>
    <name evidence="1" type="primary">mscL</name>
    <name type="ordered locus">BPSL2107</name>
</gene>
<name>MSCL_BURPS</name>
<keyword id="KW-0997">Cell inner membrane</keyword>
<keyword id="KW-1003">Cell membrane</keyword>
<keyword id="KW-0407">Ion channel</keyword>
<keyword id="KW-0406">Ion transport</keyword>
<keyword id="KW-0472">Membrane</keyword>
<keyword id="KW-1185">Reference proteome</keyword>
<keyword id="KW-0812">Transmembrane</keyword>
<keyword id="KW-1133">Transmembrane helix</keyword>
<keyword id="KW-0813">Transport</keyword>
<comment type="function">
    <text evidence="1">Channel that opens in response to stretch forces in the membrane lipid bilayer. May participate in the regulation of osmotic pressure changes within the cell.</text>
</comment>
<comment type="subunit">
    <text evidence="1">Homopentamer.</text>
</comment>
<comment type="subcellular location">
    <subcellularLocation>
        <location evidence="1">Cell inner membrane</location>
        <topology evidence="1">Multi-pass membrane protein</topology>
    </subcellularLocation>
</comment>
<comment type="similarity">
    <text evidence="1">Belongs to the MscL family.</text>
</comment>
<organism>
    <name type="scientific">Burkholderia pseudomallei (strain K96243)</name>
    <dbReference type="NCBI Taxonomy" id="272560"/>
    <lineage>
        <taxon>Bacteria</taxon>
        <taxon>Pseudomonadati</taxon>
        <taxon>Pseudomonadota</taxon>
        <taxon>Betaproteobacteria</taxon>
        <taxon>Burkholderiales</taxon>
        <taxon>Burkholderiaceae</taxon>
        <taxon>Burkholderia</taxon>
        <taxon>pseudomallei group</taxon>
    </lineage>
</organism>
<accession>Q63T62</accession>
<reference key="1">
    <citation type="journal article" date="2004" name="Proc. Natl. Acad. Sci. U.S.A.">
        <title>Genomic plasticity of the causative agent of melioidosis, Burkholderia pseudomallei.</title>
        <authorList>
            <person name="Holden M.T.G."/>
            <person name="Titball R.W."/>
            <person name="Peacock S.J."/>
            <person name="Cerdeno-Tarraga A.-M."/>
            <person name="Atkins T."/>
            <person name="Crossman L.C."/>
            <person name="Pitt T."/>
            <person name="Churcher C."/>
            <person name="Mungall K.L."/>
            <person name="Bentley S.D."/>
            <person name="Sebaihia M."/>
            <person name="Thomson N.R."/>
            <person name="Bason N."/>
            <person name="Beacham I.R."/>
            <person name="Brooks K."/>
            <person name="Brown K.A."/>
            <person name="Brown N.F."/>
            <person name="Challis G.L."/>
            <person name="Cherevach I."/>
            <person name="Chillingworth T."/>
            <person name="Cronin A."/>
            <person name="Crossett B."/>
            <person name="Davis P."/>
            <person name="DeShazer D."/>
            <person name="Feltwell T."/>
            <person name="Fraser A."/>
            <person name="Hance Z."/>
            <person name="Hauser H."/>
            <person name="Holroyd S."/>
            <person name="Jagels K."/>
            <person name="Keith K.E."/>
            <person name="Maddison M."/>
            <person name="Moule S."/>
            <person name="Price C."/>
            <person name="Quail M.A."/>
            <person name="Rabbinowitsch E."/>
            <person name="Rutherford K."/>
            <person name="Sanders M."/>
            <person name="Simmonds M."/>
            <person name="Songsivilai S."/>
            <person name="Stevens K."/>
            <person name="Tumapa S."/>
            <person name="Vesaratchavest M."/>
            <person name="Whitehead S."/>
            <person name="Yeats C."/>
            <person name="Barrell B.G."/>
            <person name="Oyston P.C.F."/>
            <person name="Parkhill J."/>
        </authorList>
    </citation>
    <scope>NUCLEOTIDE SEQUENCE [LARGE SCALE GENOMIC DNA]</scope>
    <source>
        <strain>K96243</strain>
    </source>
</reference>
<dbReference type="EMBL" id="BX571965">
    <property type="protein sequence ID" value="CAH36110.1"/>
    <property type="molecule type" value="Genomic_DNA"/>
</dbReference>
<dbReference type="RefSeq" id="WP_004192898.1">
    <property type="nucleotide sequence ID" value="NZ_CP009538.1"/>
</dbReference>
<dbReference type="RefSeq" id="YP_108704.1">
    <property type="nucleotide sequence ID" value="NC_006350.1"/>
</dbReference>
<dbReference type="SMR" id="Q63T62"/>
<dbReference type="STRING" id="272560.BPSL2107"/>
<dbReference type="GeneID" id="93060637"/>
<dbReference type="KEGG" id="bps:BPSL2107"/>
<dbReference type="PATRIC" id="fig|272560.51.peg.3365"/>
<dbReference type="eggNOG" id="COG1970">
    <property type="taxonomic scope" value="Bacteria"/>
</dbReference>
<dbReference type="Proteomes" id="UP000000605">
    <property type="component" value="Chromosome 1"/>
</dbReference>
<dbReference type="GO" id="GO:0005886">
    <property type="term" value="C:plasma membrane"/>
    <property type="evidence" value="ECO:0007669"/>
    <property type="project" value="UniProtKB-SubCell"/>
</dbReference>
<dbReference type="GO" id="GO:0008381">
    <property type="term" value="F:mechanosensitive monoatomic ion channel activity"/>
    <property type="evidence" value="ECO:0007669"/>
    <property type="project" value="UniProtKB-UniRule"/>
</dbReference>
<dbReference type="Gene3D" id="1.10.1200.120">
    <property type="entry name" value="Large-conductance mechanosensitive channel, MscL, domain 1"/>
    <property type="match status" value="1"/>
</dbReference>
<dbReference type="HAMAP" id="MF_00115">
    <property type="entry name" value="MscL"/>
    <property type="match status" value="1"/>
</dbReference>
<dbReference type="InterPro" id="IPR019823">
    <property type="entry name" value="Mechanosensitive_channel_CS"/>
</dbReference>
<dbReference type="InterPro" id="IPR001185">
    <property type="entry name" value="MS_channel"/>
</dbReference>
<dbReference type="InterPro" id="IPR037673">
    <property type="entry name" value="MSC/AndL"/>
</dbReference>
<dbReference type="InterPro" id="IPR036019">
    <property type="entry name" value="MscL_channel"/>
</dbReference>
<dbReference type="NCBIfam" id="TIGR00220">
    <property type="entry name" value="mscL"/>
    <property type="match status" value="1"/>
</dbReference>
<dbReference type="NCBIfam" id="NF001843">
    <property type="entry name" value="PRK00567.1-4"/>
    <property type="match status" value="1"/>
</dbReference>
<dbReference type="NCBIfam" id="NF010557">
    <property type="entry name" value="PRK13952.1"/>
    <property type="match status" value="1"/>
</dbReference>
<dbReference type="PANTHER" id="PTHR30266:SF2">
    <property type="entry name" value="LARGE-CONDUCTANCE MECHANOSENSITIVE CHANNEL"/>
    <property type="match status" value="1"/>
</dbReference>
<dbReference type="PANTHER" id="PTHR30266">
    <property type="entry name" value="MECHANOSENSITIVE CHANNEL MSCL"/>
    <property type="match status" value="1"/>
</dbReference>
<dbReference type="Pfam" id="PF01741">
    <property type="entry name" value="MscL"/>
    <property type="match status" value="1"/>
</dbReference>
<dbReference type="PRINTS" id="PR01264">
    <property type="entry name" value="MECHCHANNEL"/>
</dbReference>
<dbReference type="SUPFAM" id="SSF81330">
    <property type="entry name" value="Gated mechanosensitive channel"/>
    <property type="match status" value="1"/>
</dbReference>
<dbReference type="PROSITE" id="PS01327">
    <property type="entry name" value="MSCL"/>
    <property type="match status" value="1"/>
</dbReference>